<dbReference type="EC" id="2.4.2.45" evidence="3"/>
<dbReference type="EMBL" id="CP000480">
    <property type="protein sequence ID" value="ABK74962.1"/>
    <property type="molecule type" value="Genomic_DNA"/>
</dbReference>
<dbReference type="EMBL" id="CP001663">
    <property type="protein sequence ID" value="AFP42659.1"/>
    <property type="status" value="ALT_INIT"/>
    <property type="molecule type" value="Genomic_DNA"/>
</dbReference>
<dbReference type="RefSeq" id="YP_890614.1">
    <property type="nucleotide sequence ID" value="NC_008596.1"/>
</dbReference>
<dbReference type="SMR" id="A0R626"/>
<dbReference type="STRING" id="246196.MSMEG_6401"/>
<dbReference type="PaxDb" id="246196-MSMEI_6233"/>
<dbReference type="KEGG" id="msg:MSMEI_6233"/>
<dbReference type="KEGG" id="msm:MSMEG_6401"/>
<dbReference type="PATRIC" id="fig|246196.19.peg.6227"/>
<dbReference type="eggNOG" id="COG0382">
    <property type="taxonomic scope" value="Bacteria"/>
</dbReference>
<dbReference type="OrthoDB" id="9803632at2"/>
<dbReference type="UniPathway" id="UPA00963"/>
<dbReference type="Proteomes" id="UP000000757">
    <property type="component" value="Chromosome"/>
</dbReference>
<dbReference type="Proteomes" id="UP000006158">
    <property type="component" value="Chromosome"/>
</dbReference>
<dbReference type="GO" id="GO:0005886">
    <property type="term" value="C:plasma membrane"/>
    <property type="evidence" value="ECO:0007669"/>
    <property type="project" value="UniProtKB-SubCell"/>
</dbReference>
<dbReference type="GO" id="GO:0046872">
    <property type="term" value="F:metal ion binding"/>
    <property type="evidence" value="ECO:0007669"/>
    <property type="project" value="UniProtKB-KW"/>
</dbReference>
<dbReference type="GO" id="GO:0016765">
    <property type="term" value="F:transferase activity, transferring alkyl or aryl (other than methyl) groups"/>
    <property type="evidence" value="ECO:0007669"/>
    <property type="project" value="InterPro"/>
</dbReference>
<dbReference type="GO" id="GO:0045227">
    <property type="term" value="P:capsule polysaccharide biosynthetic process"/>
    <property type="evidence" value="ECO:0007669"/>
    <property type="project" value="UniProtKB-UniPathway"/>
</dbReference>
<dbReference type="GO" id="GO:0071555">
    <property type="term" value="P:cell wall organization"/>
    <property type="evidence" value="ECO:0007669"/>
    <property type="project" value="UniProtKB-KW"/>
</dbReference>
<dbReference type="CDD" id="cd13963">
    <property type="entry name" value="PT_UbiA_2"/>
    <property type="match status" value="1"/>
</dbReference>
<dbReference type="Gene3D" id="1.10.357.140">
    <property type="entry name" value="UbiA prenyltransferase"/>
    <property type="match status" value="1"/>
</dbReference>
<dbReference type="InterPro" id="IPR000537">
    <property type="entry name" value="UbiA_prenyltransferase"/>
</dbReference>
<dbReference type="InterPro" id="IPR044878">
    <property type="entry name" value="UbiA_sf"/>
</dbReference>
<dbReference type="NCBIfam" id="NF008976">
    <property type="entry name" value="PRK12324.1-1"/>
    <property type="match status" value="1"/>
</dbReference>
<dbReference type="NCBIfam" id="NF008978">
    <property type="entry name" value="PRK12324.1-4"/>
    <property type="match status" value="1"/>
</dbReference>
<dbReference type="Pfam" id="PF01040">
    <property type="entry name" value="UbiA"/>
    <property type="match status" value="1"/>
</dbReference>
<evidence type="ECO:0000250" key="1">
    <source>
        <dbReference type="UniProtKB" id="P9WFR5"/>
    </source>
</evidence>
<evidence type="ECO:0000255" key="2"/>
<evidence type="ECO:0000269" key="3">
    <source>
    </source>
</evidence>
<evidence type="ECO:0000303" key="4">
    <source>
    </source>
</evidence>
<evidence type="ECO:0000305" key="5"/>
<evidence type="ECO:0000305" key="6">
    <source>
    </source>
</evidence>
<organism>
    <name type="scientific">Mycolicibacterium smegmatis (strain ATCC 700084 / mc(2)155)</name>
    <name type="common">Mycobacterium smegmatis</name>
    <dbReference type="NCBI Taxonomy" id="246196"/>
    <lineage>
        <taxon>Bacteria</taxon>
        <taxon>Bacillati</taxon>
        <taxon>Actinomycetota</taxon>
        <taxon>Actinomycetes</taxon>
        <taxon>Mycobacteriales</taxon>
        <taxon>Mycobacteriaceae</taxon>
        <taxon>Mycolicibacterium</taxon>
    </lineage>
</organism>
<sequence length="318" mass="34527">MDATHMSEEAQPTAGPPKNLVSGLIKAVRPRQWIKNLLVLAAPLAAVGSGIEYDYADVAAKVSVAFVVFCLAASSIYLINDARDVEADRAHPTKRFRPIAAGVVPEWMAYSLAGLLAVASLVISWWLTANLAIVMAVYIAVQLAYCFGLKHQAVLDICIVSSGFLIRAIAGGVAADIPLSQWFLLVMAFGSLFMAAGKRYAELQLAERTGAKIRKSLESYTSSYLRFVWTLSATAMVVCYGLWAFSRDRANDLMTLDAQDASWYAVTMIPFTIAILRYAVDIDGGIAGEPEEIALKDRVLQILFLAWIGTIGAAIYFS</sequence>
<accession>A0R626</accession>
<accession>I7GGE4</accession>
<name>DPPRS_MYCS2</name>
<keyword id="KW-0997">Cell inner membrane</keyword>
<keyword id="KW-1003">Cell membrane</keyword>
<keyword id="KW-0961">Cell wall biogenesis/degradation</keyword>
<keyword id="KW-0460">Magnesium</keyword>
<keyword id="KW-0472">Membrane</keyword>
<keyword id="KW-0479">Metal-binding</keyword>
<keyword id="KW-1185">Reference proteome</keyword>
<keyword id="KW-0808">Transferase</keyword>
<keyword id="KW-0812">Transmembrane</keyword>
<keyword id="KW-1133">Transmembrane helix</keyword>
<gene>
    <name type="ordered locus">MSMEG_6401</name>
    <name type="ordered locus">MSMEI_6233</name>
</gene>
<feature type="chain" id="PRO_0000420588" description="Decaprenyl-phosphate phosphoribosyltransferase">
    <location>
        <begin position="1"/>
        <end position="318"/>
    </location>
</feature>
<feature type="transmembrane region" description="Helical" evidence="2">
    <location>
        <begin position="33"/>
        <end position="53"/>
    </location>
</feature>
<feature type="transmembrane region" description="Helical" evidence="2">
    <location>
        <begin position="59"/>
        <end position="79"/>
    </location>
</feature>
<feature type="transmembrane region" description="Helical" evidence="2">
    <location>
        <begin position="99"/>
        <end position="119"/>
    </location>
</feature>
<feature type="transmembrane region" description="Helical" evidence="2">
    <location>
        <begin position="121"/>
        <end position="141"/>
    </location>
</feature>
<feature type="transmembrane region" description="Helical" evidence="2">
    <location>
        <begin position="153"/>
        <end position="173"/>
    </location>
</feature>
<feature type="transmembrane region" description="Helical" evidence="2">
    <location>
        <begin position="177"/>
        <end position="197"/>
    </location>
</feature>
<feature type="transmembrane region" description="Helical" evidence="2">
    <location>
        <begin position="225"/>
        <end position="245"/>
    </location>
</feature>
<feature type="transmembrane region" description="Helical" evidence="2">
    <location>
        <begin position="262"/>
        <end position="282"/>
    </location>
</feature>
<feature type="transmembrane region" description="Helical" evidence="2">
    <location>
        <begin position="298"/>
        <end position="318"/>
    </location>
</feature>
<feature type="binding site" evidence="1">
    <location>
        <position position="35"/>
    </location>
    <ligand>
        <name>5-phospho-alpha-D-ribose 1-diphosphate</name>
        <dbReference type="ChEBI" id="CHEBI:58017"/>
    </ligand>
</feature>
<feature type="binding site" evidence="1">
    <location>
        <position position="77"/>
    </location>
    <ligand>
        <name>5-phospho-alpha-D-ribose 1-diphosphate</name>
        <dbReference type="ChEBI" id="CHEBI:58017"/>
    </ligand>
</feature>
<feature type="binding site" evidence="1">
    <location>
        <position position="80"/>
    </location>
    <ligand>
        <name>Mg(2+)</name>
        <dbReference type="ChEBI" id="CHEBI:18420"/>
    </ligand>
</feature>
<feature type="binding site" evidence="1">
    <location>
        <position position="84"/>
    </location>
    <ligand>
        <name>Mg(2+)</name>
        <dbReference type="ChEBI" id="CHEBI:18420"/>
    </ligand>
</feature>
<feature type="binding site" evidence="1">
    <location>
        <position position="94"/>
    </location>
    <ligand>
        <name>5-phospho-alpha-D-ribose 1-diphosphate</name>
        <dbReference type="ChEBI" id="CHEBI:58017"/>
    </ligand>
</feature>
<feature type="binding site" evidence="1">
    <location>
        <position position="150"/>
    </location>
    <ligand>
        <name>5-phospho-alpha-D-ribose 1-diphosphate</name>
        <dbReference type="ChEBI" id="CHEBI:58017"/>
    </ligand>
</feature>
<feature type="binding site" evidence="1">
    <location>
        <position position="167"/>
    </location>
    <ligand>
        <name>5-phospho-alpha-D-ribose 1-diphosphate</name>
        <dbReference type="ChEBI" id="CHEBI:58017"/>
    </ligand>
</feature>
<feature type="binding site" evidence="1">
    <location>
        <position position="198"/>
    </location>
    <ligand>
        <name>trans,octa-cis-decaprenyl phosphate</name>
        <dbReference type="ChEBI" id="CHEBI:65079"/>
    </ligand>
</feature>
<reference key="1">
    <citation type="submission" date="2006-10" db="EMBL/GenBank/DDBJ databases">
        <authorList>
            <person name="Fleischmann R.D."/>
            <person name="Dodson R.J."/>
            <person name="Haft D.H."/>
            <person name="Merkel J.S."/>
            <person name="Nelson W.C."/>
            <person name="Fraser C.M."/>
        </authorList>
    </citation>
    <scope>NUCLEOTIDE SEQUENCE [LARGE SCALE GENOMIC DNA]</scope>
    <source>
        <strain>ATCC 700084 / mc(2)155</strain>
    </source>
</reference>
<reference key="2">
    <citation type="journal article" date="2007" name="Genome Biol.">
        <title>Interrupted coding sequences in Mycobacterium smegmatis: authentic mutations or sequencing errors?</title>
        <authorList>
            <person name="Deshayes C."/>
            <person name="Perrodou E."/>
            <person name="Gallien S."/>
            <person name="Euphrasie D."/>
            <person name="Schaeffer C."/>
            <person name="Van-Dorsselaer A."/>
            <person name="Poch O."/>
            <person name="Lecompte O."/>
            <person name="Reyrat J.-M."/>
        </authorList>
    </citation>
    <scope>NUCLEOTIDE SEQUENCE [LARGE SCALE GENOMIC DNA]</scope>
    <source>
        <strain>ATCC 700084 / mc(2)155</strain>
    </source>
</reference>
<reference key="3">
    <citation type="journal article" date="2009" name="Genome Res.">
        <title>Ortho-proteogenomics: multiple proteomes investigation through orthology and a new MS-based protocol.</title>
        <authorList>
            <person name="Gallien S."/>
            <person name="Perrodou E."/>
            <person name="Carapito C."/>
            <person name="Deshayes C."/>
            <person name="Reyrat J.-M."/>
            <person name="Van Dorsselaer A."/>
            <person name="Poch O."/>
            <person name="Schaeffer C."/>
            <person name="Lecompte O."/>
        </authorList>
    </citation>
    <scope>NUCLEOTIDE SEQUENCE [LARGE SCALE GENOMIC DNA]</scope>
    <source>
        <strain>ATCC 700084 / mc(2)155</strain>
    </source>
</reference>
<reference key="4">
    <citation type="journal article" date="2008" name="Microbiology">
        <title>Identification of amino acids and domains required for catalytic activity of DPPR synthase, a cell wall biosynthetic enzyme of Mycobacterium tuberculosis.</title>
        <authorList>
            <person name="Huang H."/>
            <person name="Berg S."/>
            <person name="Spencer J.S."/>
            <person name="Vereecke D."/>
            <person name="D'Haeze W."/>
            <person name="Holsters M."/>
            <person name="McNeil M.R."/>
        </authorList>
    </citation>
    <scope>FUNCTION</scope>
    <scope>CATALYTIC ACTIVITY</scope>
    <scope>SUBCELLULAR LOCATION</scope>
</reference>
<proteinExistence type="evidence at protein level"/>
<protein>
    <recommendedName>
        <fullName evidence="5">Decaprenyl-phosphate phosphoribosyltransferase</fullName>
        <ecNumber evidence="3">2.4.2.45</ecNumber>
    </recommendedName>
    <alternativeName>
        <fullName evidence="4">5-phospho-alpha-D-ribose-1-diphosphate:decaprenyl-phosphate 5-phosphoribosyltransferase</fullName>
    </alternativeName>
    <alternativeName>
        <fullName evidence="4">DPPR synthase</fullName>
    </alternativeName>
</protein>
<comment type="function">
    <text evidence="3">Involved in the biosynthesis of decaprenylphosphoryl arabinose (DPA) a precursor for arabinan synthesis in mycobacterial cell wall biosynthesis (PubMed:18310020). Catalyzes the transfer of a 5-phosphoribosyl residue from phosphoribose diphosphate (PRPP) to decaprenyl phosphate (DP) to form decaprenylphosphoryl-5-phosphoribose (DPPR) (PubMed:18310020).</text>
</comment>
<comment type="catalytic activity">
    <reaction evidence="3">
        <text>trans,octa-cis-decaprenyl phosphate + 5-phospho-alpha-D-ribose 1-diphosphate + H(+) = trans,octa-cis-decaprenylphospho-beta-D-ribofuranose 5-phosphate + diphosphate</text>
        <dbReference type="Rhea" id="RHEA:34067"/>
        <dbReference type="ChEBI" id="CHEBI:15378"/>
        <dbReference type="ChEBI" id="CHEBI:33019"/>
        <dbReference type="ChEBI" id="CHEBI:58017"/>
        <dbReference type="ChEBI" id="CHEBI:65079"/>
        <dbReference type="ChEBI" id="CHEBI:66937"/>
        <dbReference type="EC" id="2.4.2.45"/>
    </reaction>
    <physiologicalReaction direction="left-to-right" evidence="6">
        <dbReference type="Rhea" id="RHEA:34068"/>
    </physiologicalReaction>
</comment>
<comment type="cofactor">
    <cofactor evidence="1">
        <name>Mg(2+)</name>
        <dbReference type="ChEBI" id="CHEBI:18420"/>
    </cofactor>
</comment>
<comment type="pathway">
    <text evidence="6">Cell wall biogenesis; cell wall polysaccharide biosynthesis.</text>
</comment>
<comment type="subcellular location">
    <subcellularLocation>
        <location evidence="3">Cell inner membrane</location>
        <topology evidence="2">Multi-pass membrane protein</topology>
    </subcellularLocation>
</comment>
<comment type="similarity">
    <text evidence="5">Belongs to the UbiA prenyltransferase family. DPPR synthase subfamily.</text>
</comment>
<comment type="sequence caution" evidence="5">
    <conflict type="erroneous initiation">
        <sequence resource="EMBL-CDS" id="AFP42659"/>
    </conflict>
    <text>Truncated N-terminus.</text>
</comment>